<name>VPC19_MYCTU</name>
<comment type="function">
    <text evidence="1 3">Toxic component of a type II toxin-antitoxin (TA) system. An RNase (By similarity). Upon expression in M.smegmatis inhibits colony formation. Its toxic effect is neutralized by coexpression with cognate antitoxin VapB19.</text>
</comment>
<comment type="cofactor">
    <cofactor evidence="1">
        <name>Mg(2+)</name>
        <dbReference type="ChEBI" id="CHEBI:18420"/>
    </cofactor>
</comment>
<comment type="subcellular location">
    <subcellularLocation>
        <location>Secreted</location>
    </subcellularLocation>
    <text evidence="4">Following 6 weeks of nutrient starvation.</text>
</comment>
<comment type="induction">
    <text evidence="2">Up-regulated 2.3-fold 7 days after infection of human macrophages.</text>
</comment>
<comment type="similarity">
    <text evidence="1">Belongs to the PINc/VapC protein family.</text>
</comment>
<reference key="1">
    <citation type="journal article" date="1998" name="Nature">
        <title>Deciphering the biology of Mycobacterium tuberculosis from the complete genome sequence.</title>
        <authorList>
            <person name="Cole S.T."/>
            <person name="Brosch R."/>
            <person name="Parkhill J."/>
            <person name="Garnier T."/>
            <person name="Churcher C.M."/>
            <person name="Harris D.E."/>
            <person name="Gordon S.V."/>
            <person name="Eiglmeier K."/>
            <person name="Gas S."/>
            <person name="Barry C.E. III"/>
            <person name="Tekaia F."/>
            <person name="Badcock K."/>
            <person name="Basham D."/>
            <person name="Brown D."/>
            <person name="Chillingworth T."/>
            <person name="Connor R."/>
            <person name="Davies R.M."/>
            <person name="Devlin K."/>
            <person name="Feltwell T."/>
            <person name="Gentles S."/>
            <person name="Hamlin N."/>
            <person name="Holroyd S."/>
            <person name="Hornsby T."/>
            <person name="Jagels K."/>
            <person name="Krogh A."/>
            <person name="McLean J."/>
            <person name="Moule S."/>
            <person name="Murphy L.D."/>
            <person name="Oliver S."/>
            <person name="Osborne J."/>
            <person name="Quail M.A."/>
            <person name="Rajandream M.A."/>
            <person name="Rogers J."/>
            <person name="Rutter S."/>
            <person name="Seeger K."/>
            <person name="Skelton S."/>
            <person name="Squares S."/>
            <person name="Squares R."/>
            <person name="Sulston J.E."/>
            <person name="Taylor K."/>
            <person name="Whitehead S."/>
            <person name="Barrell B.G."/>
        </authorList>
    </citation>
    <scope>NUCLEOTIDE SEQUENCE [LARGE SCALE GENOMIC DNA]</scope>
    <source>
        <strain>ATCC 25618 / H37Rv</strain>
    </source>
</reference>
<reference key="2">
    <citation type="journal article" date="2005" name="Nucleic Acids Res.">
        <title>Toxin-antitoxin loci are highly abundant in free-living but lost from host-associated prokaryotes.</title>
        <authorList>
            <person name="Pandey D.P."/>
            <person name="Gerdes K."/>
        </authorList>
    </citation>
    <scope>POSSIBLE FUNCTION</scope>
    <source>
        <strain>ATCC 25618 / H37Rv</strain>
    </source>
</reference>
<reference key="3">
    <citation type="journal article" date="2006" name="Res. Microbiol.">
        <title>Profiling of Mycobacterium tuberculosis gene expression during human macrophage infection: upregulation of the alternative sigma factor G, a group of transcriptional regulators, and proteins with unknown function.</title>
        <authorList>
            <person name="Cappelli G."/>
            <person name="Volpe E."/>
            <person name="Grassi M."/>
            <person name="Liseo B."/>
            <person name="Colizzi V."/>
            <person name="Mariani F."/>
        </authorList>
    </citation>
    <scope>INDUCTION IN HUMAN MACROPHAGES</scope>
    <source>
        <strain>ATCC 25618 / H37Rv</strain>
    </source>
</reference>
<reference key="4">
    <citation type="journal article" date="2009" name="PLoS Genet.">
        <title>Comprehensive functional analysis of Mycobacterium tuberculosis toxin-antitoxin systems: implications for pathogenesis, stress responses, and evolution.</title>
        <authorList>
            <person name="Ramage H.R."/>
            <person name="Connolly L.E."/>
            <person name="Cox J.S."/>
        </authorList>
    </citation>
    <scope>EXPRESSION IN M.SMEGMATIS</scope>
    <scope>FUNCTION AS A TOXIN</scope>
    <source>
        <strain>ATCC 35801 / TMC 107 / Erdman</strain>
    </source>
</reference>
<reference key="5">
    <citation type="journal article" date="2011" name="Mol. Cell. Proteomics">
        <title>Proteogenomic analysis of Mycobacterium tuberculosis by high resolution mass spectrometry.</title>
        <authorList>
            <person name="Kelkar D.S."/>
            <person name="Kumar D."/>
            <person name="Kumar P."/>
            <person name="Balakrishnan L."/>
            <person name="Muthusamy B."/>
            <person name="Yadav A.K."/>
            <person name="Shrivastava P."/>
            <person name="Marimuthu A."/>
            <person name="Anand S."/>
            <person name="Sundaram H."/>
            <person name="Kingsbury R."/>
            <person name="Harsha H.C."/>
            <person name="Nair B."/>
            <person name="Prasad T.S."/>
            <person name="Chauhan D.S."/>
            <person name="Katoch K."/>
            <person name="Katoch V.M."/>
            <person name="Kumar P."/>
            <person name="Chaerkady R."/>
            <person name="Ramachandran S."/>
            <person name="Dash D."/>
            <person name="Pandey A."/>
        </authorList>
    </citation>
    <scope>IDENTIFICATION BY MASS SPECTROMETRY [LARGE SCALE ANALYSIS]</scope>
    <source>
        <strain>ATCC 25618 / H37Rv</strain>
    </source>
</reference>
<reference key="6">
    <citation type="journal article" date="2013" name="Mol. Cell. Proteomics">
        <title>Proteomic profiling of Mycobacterium tuberculosis identifies nutrient-starvation-responsive toxin-antitoxin systems.</title>
        <authorList>
            <person name="Albrethsen J."/>
            <person name="Agner J."/>
            <person name="Piersma S.R."/>
            <person name="Hoejrup P."/>
            <person name="Pham T.V."/>
            <person name="Weldingh K."/>
            <person name="Jimenez C.R."/>
            <person name="Andersen P."/>
            <person name="Rosenkrands I."/>
        </authorList>
    </citation>
    <scope>IDENTIFICATION BY MASS SPECTROMETRY</scope>
    <scope>SUBCELLULAR LOCATION</scope>
    <source>
        <strain>ATCC 27294 / TMC 102 / H37Rv</strain>
    </source>
</reference>
<keyword id="KW-0378">Hydrolase</keyword>
<keyword id="KW-0460">Magnesium</keyword>
<keyword id="KW-0479">Metal-binding</keyword>
<keyword id="KW-0540">Nuclease</keyword>
<keyword id="KW-1185">Reference proteome</keyword>
<keyword id="KW-0964">Secreted</keyword>
<keyword id="KW-1277">Toxin-antitoxin system</keyword>
<proteinExistence type="evidence at protein level"/>
<gene>
    <name evidence="1" type="primary">vapC19</name>
    <name type="ordered locus">Rv2548</name>
</gene>
<organism>
    <name type="scientific">Mycobacterium tuberculosis (strain ATCC 25618 / H37Rv)</name>
    <dbReference type="NCBI Taxonomy" id="83332"/>
    <lineage>
        <taxon>Bacteria</taxon>
        <taxon>Bacillati</taxon>
        <taxon>Actinomycetota</taxon>
        <taxon>Actinomycetes</taxon>
        <taxon>Mycobacteriales</taxon>
        <taxon>Mycobacteriaceae</taxon>
        <taxon>Mycobacterium</taxon>
        <taxon>Mycobacterium tuberculosis complex</taxon>
    </lineage>
</organism>
<feature type="chain" id="PRO_0000407878" description="Ribonuclease VapC19">
    <location>
        <begin position="1"/>
        <end position="125"/>
    </location>
</feature>
<feature type="domain" description="PINc" evidence="1">
    <location>
        <begin position="3"/>
        <end position="122"/>
    </location>
</feature>
<feature type="binding site" evidence="1">
    <location>
        <position position="5"/>
    </location>
    <ligand>
        <name>Mg(2+)</name>
        <dbReference type="ChEBI" id="CHEBI:18420"/>
    </ligand>
</feature>
<feature type="binding site" evidence="1">
    <location>
        <position position="93"/>
    </location>
    <ligand>
        <name>Mg(2+)</name>
        <dbReference type="ChEBI" id="CHEBI:18420"/>
    </ligand>
</feature>
<sequence>MKLIDTTIAVDHLRGEPAAAVLLAELINNGEEIAASELVRFELLAGVRESELAALEAFFSAVVWTLVTEDIARIGGRLARRYRSSHRGIDDVDYLIAATAIVVDADLLTTNVRHFPMFPDLQPPY</sequence>
<protein>
    <recommendedName>
        <fullName evidence="1">Ribonuclease VapC19</fullName>
        <shortName evidence="1">RNase VapC19</shortName>
        <ecNumber evidence="1">3.1.-.-</ecNumber>
    </recommendedName>
    <alternativeName>
        <fullName evidence="1">Toxin VapC19</fullName>
    </alternativeName>
</protein>
<accession>P9WF93</accession>
<accession>L0TCP7</accession>
<accession>P95005</accession>
<accession>Q7D6X9</accession>
<evidence type="ECO:0000255" key="1">
    <source>
        <dbReference type="HAMAP-Rule" id="MF_00265"/>
    </source>
</evidence>
<evidence type="ECO:0000269" key="2">
    <source>
    </source>
</evidence>
<evidence type="ECO:0000269" key="3">
    <source>
    </source>
</evidence>
<evidence type="ECO:0000269" key="4">
    <source>
    </source>
</evidence>
<dbReference type="EC" id="3.1.-.-" evidence="1"/>
<dbReference type="EMBL" id="AL123456">
    <property type="protein sequence ID" value="CCP45343.1"/>
    <property type="molecule type" value="Genomic_DNA"/>
</dbReference>
<dbReference type="PIR" id="H70659">
    <property type="entry name" value="H70659"/>
</dbReference>
<dbReference type="RefSeq" id="NP_217064.1">
    <property type="nucleotide sequence ID" value="NC_000962.3"/>
</dbReference>
<dbReference type="RefSeq" id="WP_003413174.1">
    <property type="nucleotide sequence ID" value="NZ_NVQJ01000032.1"/>
</dbReference>
<dbReference type="SMR" id="P9WF93"/>
<dbReference type="STRING" id="83332.Rv2548"/>
<dbReference type="PaxDb" id="83332-Rv2548"/>
<dbReference type="DNASU" id="888412"/>
<dbReference type="GeneID" id="888412"/>
<dbReference type="KEGG" id="mtu:Rv2548"/>
<dbReference type="KEGG" id="mtv:RVBD_2548"/>
<dbReference type="TubercuList" id="Rv2548"/>
<dbReference type="eggNOG" id="COG1487">
    <property type="taxonomic scope" value="Bacteria"/>
</dbReference>
<dbReference type="InParanoid" id="P9WF93"/>
<dbReference type="OrthoDB" id="532510at2"/>
<dbReference type="PhylomeDB" id="P9WF93"/>
<dbReference type="Proteomes" id="UP000001584">
    <property type="component" value="Chromosome"/>
</dbReference>
<dbReference type="GO" id="GO:0005576">
    <property type="term" value="C:extracellular region"/>
    <property type="evidence" value="ECO:0007669"/>
    <property type="project" value="UniProtKB-SubCell"/>
</dbReference>
<dbReference type="GO" id="GO:0000287">
    <property type="term" value="F:magnesium ion binding"/>
    <property type="evidence" value="ECO:0007669"/>
    <property type="project" value="UniProtKB-UniRule"/>
</dbReference>
<dbReference type="GO" id="GO:0004521">
    <property type="term" value="F:RNA endonuclease activity"/>
    <property type="evidence" value="ECO:0000318"/>
    <property type="project" value="GO_Central"/>
</dbReference>
<dbReference type="GO" id="GO:0051701">
    <property type="term" value="P:biological process involved in interaction with host"/>
    <property type="evidence" value="ECO:0000315"/>
    <property type="project" value="MTBBASE"/>
</dbReference>
<dbReference type="GO" id="GO:0045926">
    <property type="term" value="P:negative regulation of growth"/>
    <property type="evidence" value="ECO:0000315"/>
    <property type="project" value="MTBBASE"/>
</dbReference>
<dbReference type="CDD" id="cd18741">
    <property type="entry name" value="PIN_VapC4-5_FitB-like"/>
    <property type="match status" value="1"/>
</dbReference>
<dbReference type="Gene3D" id="3.40.50.1010">
    <property type="entry name" value="5'-nuclease"/>
    <property type="match status" value="1"/>
</dbReference>
<dbReference type="HAMAP" id="MF_00265">
    <property type="entry name" value="VapC_Nob1"/>
    <property type="match status" value="1"/>
</dbReference>
<dbReference type="InterPro" id="IPR029060">
    <property type="entry name" value="PIN-like_dom_sf"/>
</dbReference>
<dbReference type="InterPro" id="IPR002716">
    <property type="entry name" value="PIN_dom"/>
</dbReference>
<dbReference type="InterPro" id="IPR050556">
    <property type="entry name" value="Type_II_TA_system_RNase"/>
</dbReference>
<dbReference type="InterPro" id="IPR022907">
    <property type="entry name" value="VapC_family"/>
</dbReference>
<dbReference type="PANTHER" id="PTHR33653">
    <property type="entry name" value="RIBONUCLEASE VAPC2"/>
    <property type="match status" value="1"/>
</dbReference>
<dbReference type="PANTHER" id="PTHR33653:SF1">
    <property type="entry name" value="RIBONUCLEASE VAPC2"/>
    <property type="match status" value="1"/>
</dbReference>
<dbReference type="Pfam" id="PF01850">
    <property type="entry name" value="PIN"/>
    <property type="match status" value="1"/>
</dbReference>
<dbReference type="SUPFAM" id="SSF88723">
    <property type="entry name" value="PIN domain-like"/>
    <property type="match status" value="1"/>
</dbReference>